<reference evidence="7" key="1">
    <citation type="journal article" date="2005" name="Science">
        <title>The transcriptional landscape of the mammalian genome.</title>
        <authorList>
            <person name="Carninci P."/>
            <person name="Kasukawa T."/>
            <person name="Katayama S."/>
            <person name="Gough J."/>
            <person name="Frith M.C."/>
            <person name="Maeda N."/>
            <person name="Oyama R."/>
            <person name="Ravasi T."/>
            <person name="Lenhard B."/>
            <person name="Wells C."/>
            <person name="Kodzius R."/>
            <person name="Shimokawa K."/>
            <person name="Bajic V.B."/>
            <person name="Brenner S.E."/>
            <person name="Batalov S."/>
            <person name="Forrest A.R."/>
            <person name="Zavolan M."/>
            <person name="Davis M.J."/>
            <person name="Wilming L.G."/>
            <person name="Aidinis V."/>
            <person name="Allen J.E."/>
            <person name="Ambesi-Impiombato A."/>
            <person name="Apweiler R."/>
            <person name="Aturaliya R.N."/>
            <person name="Bailey T.L."/>
            <person name="Bansal M."/>
            <person name="Baxter L."/>
            <person name="Beisel K.W."/>
            <person name="Bersano T."/>
            <person name="Bono H."/>
            <person name="Chalk A.M."/>
            <person name="Chiu K.P."/>
            <person name="Choudhary V."/>
            <person name="Christoffels A."/>
            <person name="Clutterbuck D.R."/>
            <person name="Crowe M.L."/>
            <person name="Dalla E."/>
            <person name="Dalrymple B.P."/>
            <person name="de Bono B."/>
            <person name="Della Gatta G."/>
            <person name="di Bernardo D."/>
            <person name="Down T."/>
            <person name="Engstrom P."/>
            <person name="Fagiolini M."/>
            <person name="Faulkner G."/>
            <person name="Fletcher C.F."/>
            <person name="Fukushima T."/>
            <person name="Furuno M."/>
            <person name="Futaki S."/>
            <person name="Gariboldi M."/>
            <person name="Georgii-Hemming P."/>
            <person name="Gingeras T.R."/>
            <person name="Gojobori T."/>
            <person name="Green R.E."/>
            <person name="Gustincich S."/>
            <person name="Harbers M."/>
            <person name="Hayashi Y."/>
            <person name="Hensch T.K."/>
            <person name="Hirokawa N."/>
            <person name="Hill D."/>
            <person name="Huminiecki L."/>
            <person name="Iacono M."/>
            <person name="Ikeo K."/>
            <person name="Iwama A."/>
            <person name="Ishikawa T."/>
            <person name="Jakt M."/>
            <person name="Kanapin A."/>
            <person name="Katoh M."/>
            <person name="Kawasawa Y."/>
            <person name="Kelso J."/>
            <person name="Kitamura H."/>
            <person name="Kitano H."/>
            <person name="Kollias G."/>
            <person name="Krishnan S.P."/>
            <person name="Kruger A."/>
            <person name="Kummerfeld S.K."/>
            <person name="Kurochkin I.V."/>
            <person name="Lareau L.F."/>
            <person name="Lazarevic D."/>
            <person name="Lipovich L."/>
            <person name="Liu J."/>
            <person name="Liuni S."/>
            <person name="McWilliam S."/>
            <person name="Madan Babu M."/>
            <person name="Madera M."/>
            <person name="Marchionni L."/>
            <person name="Matsuda H."/>
            <person name="Matsuzawa S."/>
            <person name="Miki H."/>
            <person name="Mignone F."/>
            <person name="Miyake S."/>
            <person name="Morris K."/>
            <person name="Mottagui-Tabar S."/>
            <person name="Mulder N."/>
            <person name="Nakano N."/>
            <person name="Nakauchi H."/>
            <person name="Ng P."/>
            <person name="Nilsson R."/>
            <person name="Nishiguchi S."/>
            <person name="Nishikawa S."/>
            <person name="Nori F."/>
            <person name="Ohara O."/>
            <person name="Okazaki Y."/>
            <person name="Orlando V."/>
            <person name="Pang K.C."/>
            <person name="Pavan W.J."/>
            <person name="Pavesi G."/>
            <person name="Pesole G."/>
            <person name="Petrovsky N."/>
            <person name="Piazza S."/>
            <person name="Reed J."/>
            <person name="Reid J.F."/>
            <person name="Ring B.Z."/>
            <person name="Ringwald M."/>
            <person name="Rost B."/>
            <person name="Ruan Y."/>
            <person name="Salzberg S.L."/>
            <person name="Sandelin A."/>
            <person name="Schneider C."/>
            <person name="Schoenbach C."/>
            <person name="Sekiguchi K."/>
            <person name="Semple C.A."/>
            <person name="Seno S."/>
            <person name="Sessa L."/>
            <person name="Sheng Y."/>
            <person name="Shibata Y."/>
            <person name="Shimada H."/>
            <person name="Shimada K."/>
            <person name="Silva D."/>
            <person name="Sinclair B."/>
            <person name="Sperling S."/>
            <person name="Stupka E."/>
            <person name="Sugiura K."/>
            <person name="Sultana R."/>
            <person name="Takenaka Y."/>
            <person name="Taki K."/>
            <person name="Tammoja K."/>
            <person name="Tan S.L."/>
            <person name="Tang S."/>
            <person name="Taylor M.S."/>
            <person name="Tegner J."/>
            <person name="Teichmann S.A."/>
            <person name="Ueda H.R."/>
            <person name="van Nimwegen E."/>
            <person name="Verardo R."/>
            <person name="Wei C.L."/>
            <person name="Yagi K."/>
            <person name="Yamanishi H."/>
            <person name="Zabarovsky E."/>
            <person name="Zhu S."/>
            <person name="Zimmer A."/>
            <person name="Hide W."/>
            <person name="Bult C."/>
            <person name="Grimmond S.M."/>
            <person name="Teasdale R.D."/>
            <person name="Liu E.T."/>
            <person name="Brusic V."/>
            <person name="Quackenbush J."/>
            <person name="Wahlestedt C."/>
            <person name="Mattick J.S."/>
            <person name="Hume D.A."/>
            <person name="Kai C."/>
            <person name="Sasaki D."/>
            <person name="Tomaru Y."/>
            <person name="Fukuda S."/>
            <person name="Kanamori-Katayama M."/>
            <person name="Suzuki M."/>
            <person name="Aoki J."/>
            <person name="Arakawa T."/>
            <person name="Iida J."/>
            <person name="Imamura K."/>
            <person name="Itoh M."/>
            <person name="Kato T."/>
            <person name="Kawaji H."/>
            <person name="Kawagashira N."/>
            <person name="Kawashima T."/>
            <person name="Kojima M."/>
            <person name="Kondo S."/>
            <person name="Konno H."/>
            <person name="Nakano K."/>
            <person name="Ninomiya N."/>
            <person name="Nishio T."/>
            <person name="Okada M."/>
            <person name="Plessy C."/>
            <person name="Shibata K."/>
            <person name="Shiraki T."/>
            <person name="Suzuki S."/>
            <person name="Tagami M."/>
            <person name="Waki K."/>
            <person name="Watahiki A."/>
            <person name="Okamura-Oho Y."/>
            <person name="Suzuki H."/>
            <person name="Kawai J."/>
            <person name="Hayashizaki Y."/>
        </authorList>
    </citation>
    <scope>NUCLEOTIDE SEQUENCE [LARGE SCALE MRNA]</scope>
    <source>
        <strain evidence="7">C57BL/6J</strain>
        <tissue>Seminal vesicle</tissue>
    </source>
</reference>
<reference key="2">
    <citation type="journal article" date="2006" name="Reproduction">
        <title>SSLP-1, a secreted Ly-6 protein purified from mouse seminal vesicle fluid.</title>
        <authorList>
            <person name="Li S.-H."/>
            <person name="Lee R.K.-K."/>
            <person name="Lin M.-H."/>
            <person name="Hwu Y.-M."/>
            <person name="Lu C.-H."/>
            <person name="Chen Y.-J."/>
            <person name="Chen H.-C."/>
            <person name="Chang W.-H."/>
            <person name="Chang W.-C."/>
        </authorList>
    </citation>
    <scope>PROTEIN SEQUENCE OF 22-36</scope>
    <scope>SUBUNIT</scope>
    <scope>SUBCELLULAR LOCATION</scope>
    <scope>TISSUE SPECIFICITY</scope>
    <scope>DEVELOPMENTAL STAGE</scope>
    <scope>INDUCTION</scope>
    <scope>GLYCOSYLATION</scope>
    <source>
        <tissue>Seminal vesicle</tissue>
    </source>
</reference>
<reference evidence="6" key="3">
    <citation type="journal article" date="2011" name="Reprod. Biol. Endocrinol.">
        <title>Members of the murine Pate family are predominantly expressed in the epididymis in a segment-specific fashion and regulated by androgens and other testicular factors.</title>
        <authorList>
            <person name="Turunen H.T."/>
            <person name="Sipilae P."/>
            <person name="Pujianto D.A."/>
            <person name="Damdimopoulos A.E."/>
            <person name="Bjoerkgren I."/>
            <person name="Huhtaniemi I."/>
            <person name="Poutanen M."/>
        </authorList>
    </citation>
    <scope>TISSUE SPECIFICITY</scope>
</reference>
<reference evidence="6" key="4">
    <citation type="journal article" date="2016" name="Hum. Genomics">
        <title>Organization, evolution and functions of the human and mouse Ly6/uPAR family genes.</title>
        <authorList>
            <person name="Loughner C.L."/>
            <person name="Bruford E.A."/>
            <person name="McAndrews M.S."/>
            <person name="Delp E.E."/>
            <person name="Swamynathan S."/>
            <person name="Swamynathan S.K."/>
        </authorList>
    </citation>
    <scope>NOMENCLATURE</scope>
</reference>
<comment type="subunit">
    <text evidence="2">Monomer.</text>
</comment>
<comment type="subcellular location">
    <subcellularLocation>
        <location evidence="2">Secreted</location>
    </subcellularLocation>
</comment>
<comment type="tissue specificity">
    <text evidence="2 3">Predominantly expressed in the seminal vesicles (PubMed:16940290). Expressed in prostate, and to a lesser extent in the cauda epididymis (PubMed:21942998).</text>
</comment>
<comment type="developmental stage">
    <text evidence="2">Expressed from 3 weeks onwards.</text>
</comment>
<comment type="induction">
    <text evidence="2">By testosterone.</text>
</comment>
<comment type="PTM">
    <text evidence="2">Glycosylated.</text>
</comment>
<comment type="similarity">
    <text evidence="6">Belongs to the PATE family.</text>
</comment>
<protein>
    <recommendedName>
        <fullName evidence="5">Prostate and testis expressed protein 14</fullName>
    </recommendedName>
    <alternativeName>
        <fullName evidence="4">Secreted seminal-vesicle Ly-6 protein 1</fullName>
        <shortName evidence="4">SSLP-1</shortName>
    </alternativeName>
</protein>
<evidence type="ECO:0000255" key="1"/>
<evidence type="ECO:0000269" key="2">
    <source>
    </source>
</evidence>
<evidence type="ECO:0000269" key="3">
    <source>
    </source>
</evidence>
<evidence type="ECO:0000303" key="4">
    <source>
    </source>
</evidence>
<evidence type="ECO:0000303" key="5">
    <source>
    </source>
</evidence>
<evidence type="ECO:0000305" key="6"/>
<evidence type="ECO:0000312" key="7">
    <source>
        <dbReference type="EMBL" id="BAE25893.1"/>
    </source>
</evidence>
<keyword id="KW-0903">Direct protein sequencing</keyword>
<keyword id="KW-1015">Disulfide bond</keyword>
<keyword id="KW-0325">Glycoprotein</keyword>
<keyword id="KW-1185">Reference proteome</keyword>
<keyword id="KW-0964">Secreted</keyword>
<keyword id="KW-0732">Signal</keyword>
<dbReference type="EMBL" id="AK144443">
    <property type="protein sequence ID" value="BAE25893.1"/>
    <property type="molecule type" value="mRNA"/>
</dbReference>
<dbReference type="CCDS" id="CCDS22970.1"/>
<dbReference type="RefSeq" id="NP_001028497.1">
    <property type="nucleotide sequence ID" value="NM_001033325.3"/>
</dbReference>
<dbReference type="SMR" id="Q3UN54"/>
<dbReference type="FunCoup" id="Q3UN54">
    <property type="interactions" value="111"/>
</dbReference>
<dbReference type="STRING" id="10090.ENSMUSP00000091391"/>
<dbReference type="GlyCosmos" id="Q3UN54">
    <property type="glycosylation" value="2 sites, No reported glycans"/>
</dbReference>
<dbReference type="GlyGen" id="Q3UN54">
    <property type="glycosylation" value="2 sites, 1 N-linked glycan (1 site)"/>
</dbReference>
<dbReference type="PaxDb" id="10090-ENSMUSP00000091391"/>
<dbReference type="ProteomicsDB" id="257076"/>
<dbReference type="Ensembl" id="ENSMUST00000093868.9">
    <property type="protein sequence ID" value="ENSMUSP00000091391.2"/>
    <property type="gene ID" value="ENSMUSG00000070313.9"/>
</dbReference>
<dbReference type="GeneID" id="235973"/>
<dbReference type="KEGG" id="mmu:235973"/>
<dbReference type="UCSC" id="uc009otr.1">
    <property type="organism name" value="mouse"/>
</dbReference>
<dbReference type="AGR" id="MGI:3055869"/>
<dbReference type="CTD" id="235973"/>
<dbReference type="MGI" id="MGI:3055869">
    <property type="gene designation" value="Pate14"/>
</dbReference>
<dbReference type="VEuPathDB" id="HostDB:ENSMUSG00000070313"/>
<dbReference type="eggNOG" id="ENOG502TDW1">
    <property type="taxonomic scope" value="Eukaryota"/>
</dbReference>
<dbReference type="GeneTree" id="ENSGT00940000163158"/>
<dbReference type="HOGENOM" id="CLU_178161_0_0_1"/>
<dbReference type="InParanoid" id="Q3UN54"/>
<dbReference type="OMA" id="QCPRFNA"/>
<dbReference type="OrthoDB" id="9595010at2759"/>
<dbReference type="PhylomeDB" id="Q3UN54"/>
<dbReference type="TreeFam" id="TF337781"/>
<dbReference type="BioGRID-ORCS" id="235973">
    <property type="hits" value="1 hit in 77 CRISPR screens"/>
</dbReference>
<dbReference type="ChiTaRS" id="Pate14">
    <property type="organism name" value="mouse"/>
</dbReference>
<dbReference type="PRO" id="PR:Q3UN54"/>
<dbReference type="Proteomes" id="UP000000589">
    <property type="component" value="Chromosome 9"/>
</dbReference>
<dbReference type="RNAct" id="Q3UN54">
    <property type="molecule type" value="protein"/>
</dbReference>
<dbReference type="Bgee" id="ENSMUSG00000070313">
    <property type="expression patterns" value="Expressed in primary oocyte and 11 other cell types or tissues"/>
</dbReference>
<dbReference type="ExpressionAtlas" id="Q3UN54">
    <property type="expression patterns" value="baseline"/>
</dbReference>
<dbReference type="GO" id="GO:0005615">
    <property type="term" value="C:extracellular space"/>
    <property type="evidence" value="ECO:0000314"/>
    <property type="project" value="MGI"/>
</dbReference>
<dbReference type="CDD" id="cd23628">
    <property type="entry name" value="TFP_LU_ECD_SP10_like"/>
    <property type="match status" value="1"/>
</dbReference>
<dbReference type="InterPro" id="IPR016054">
    <property type="entry name" value="LY6_UPA_recep-like"/>
</dbReference>
<dbReference type="Pfam" id="PF00021">
    <property type="entry name" value="UPAR_LY6"/>
    <property type="match status" value="1"/>
</dbReference>
<accession>Q3UN54</accession>
<feature type="signal peptide" evidence="2">
    <location>
        <begin position="1"/>
        <end position="21"/>
    </location>
</feature>
<feature type="chain" id="PRO_0000238926" description="Prostate and testis expressed protein 14" evidence="2">
    <location>
        <begin position="22"/>
        <end position="99"/>
    </location>
</feature>
<feature type="domain" description="UPAR/Ly6" evidence="6">
    <location>
        <begin position="22"/>
        <end position="99"/>
    </location>
</feature>
<feature type="glycosylation site" description="N-linked (GlcNAc...) asparagine" evidence="1">
    <location>
        <position position="31"/>
    </location>
</feature>
<feature type="glycosylation site" description="N-linked (GlcNAc...) asparagine" evidence="1">
    <location>
        <position position="75"/>
    </location>
</feature>
<feature type="disulfide bond" evidence="1">
    <location>
        <begin position="24"/>
        <end position="51"/>
    </location>
</feature>
<feature type="disulfide bond" evidence="1">
    <location>
        <begin position="27"/>
        <end position="36"/>
    </location>
</feature>
<feature type="disulfide bond" evidence="1">
    <location>
        <begin position="43"/>
        <end position="69"/>
    </location>
</feature>
<feature type="disulfide bond" evidence="1">
    <location>
        <begin position="73"/>
        <end position="89"/>
    </location>
</feature>
<feature type="disulfide bond" evidence="1">
    <location>
        <begin position="90"/>
        <end position="96"/>
    </location>
</feature>
<gene>
    <name evidence="5" type="primary">Pate14</name>
    <name evidence="4" type="synonym">Sslp1</name>
</gene>
<name>PAT14_MOUSE</name>
<proteinExistence type="evidence at protein level"/>
<sequence length="99" mass="11155">MEKYLLLLLLGIFLRVGFLQALTCVSCGRLNSSGICETAETSCEATNNRKCALRLLYKDGKFQYGFQGCLGTCFNYTKTNNNMVKEHKCCDHQNLCNKP</sequence>
<organism>
    <name type="scientific">Mus musculus</name>
    <name type="common">Mouse</name>
    <dbReference type="NCBI Taxonomy" id="10090"/>
    <lineage>
        <taxon>Eukaryota</taxon>
        <taxon>Metazoa</taxon>
        <taxon>Chordata</taxon>
        <taxon>Craniata</taxon>
        <taxon>Vertebrata</taxon>
        <taxon>Euteleostomi</taxon>
        <taxon>Mammalia</taxon>
        <taxon>Eutheria</taxon>
        <taxon>Euarchontoglires</taxon>
        <taxon>Glires</taxon>
        <taxon>Rodentia</taxon>
        <taxon>Myomorpha</taxon>
        <taxon>Muroidea</taxon>
        <taxon>Muridae</taxon>
        <taxon>Murinae</taxon>
        <taxon>Mus</taxon>
        <taxon>Mus</taxon>
    </lineage>
</organism>